<protein>
    <recommendedName>
        <fullName evidence="1">Phosphopantetheine adenylyltransferase</fullName>
        <ecNumber evidence="1">2.7.7.3</ecNumber>
    </recommendedName>
    <alternativeName>
        <fullName evidence="1">Dephospho-CoA pyrophosphorylase</fullName>
    </alternativeName>
    <alternativeName>
        <fullName evidence="1">Pantetheine-phosphate adenylyltransferase</fullName>
        <shortName evidence="1">PPAT</shortName>
    </alternativeName>
</protein>
<dbReference type="EC" id="2.7.7.3" evidence="1"/>
<dbReference type="EMBL" id="CP000813">
    <property type="protein sequence ID" value="ABV62078.1"/>
    <property type="molecule type" value="Genomic_DNA"/>
</dbReference>
<dbReference type="RefSeq" id="WP_012009853.1">
    <property type="nucleotide sequence ID" value="NZ_VEIS01000003.1"/>
</dbReference>
<dbReference type="SMR" id="A8FCW1"/>
<dbReference type="STRING" id="315750.BPUM_1395"/>
<dbReference type="GeneID" id="5620658"/>
<dbReference type="KEGG" id="bpu:BPUM_1395"/>
<dbReference type="eggNOG" id="COG0669">
    <property type="taxonomic scope" value="Bacteria"/>
</dbReference>
<dbReference type="HOGENOM" id="CLU_100149_0_1_9"/>
<dbReference type="OrthoDB" id="9806661at2"/>
<dbReference type="UniPathway" id="UPA00241">
    <property type="reaction ID" value="UER00355"/>
</dbReference>
<dbReference type="Proteomes" id="UP000001355">
    <property type="component" value="Chromosome"/>
</dbReference>
<dbReference type="GO" id="GO:0005737">
    <property type="term" value="C:cytoplasm"/>
    <property type="evidence" value="ECO:0007669"/>
    <property type="project" value="UniProtKB-SubCell"/>
</dbReference>
<dbReference type="GO" id="GO:0005524">
    <property type="term" value="F:ATP binding"/>
    <property type="evidence" value="ECO:0007669"/>
    <property type="project" value="UniProtKB-KW"/>
</dbReference>
<dbReference type="GO" id="GO:0004595">
    <property type="term" value="F:pantetheine-phosphate adenylyltransferase activity"/>
    <property type="evidence" value="ECO:0007669"/>
    <property type="project" value="UniProtKB-UniRule"/>
</dbReference>
<dbReference type="GO" id="GO:0015937">
    <property type="term" value="P:coenzyme A biosynthetic process"/>
    <property type="evidence" value="ECO:0007669"/>
    <property type="project" value="UniProtKB-UniRule"/>
</dbReference>
<dbReference type="CDD" id="cd02163">
    <property type="entry name" value="PPAT"/>
    <property type="match status" value="1"/>
</dbReference>
<dbReference type="FunFam" id="3.40.50.620:FF:000012">
    <property type="entry name" value="Phosphopantetheine adenylyltransferase"/>
    <property type="match status" value="1"/>
</dbReference>
<dbReference type="Gene3D" id="3.40.50.620">
    <property type="entry name" value="HUPs"/>
    <property type="match status" value="1"/>
</dbReference>
<dbReference type="HAMAP" id="MF_00151">
    <property type="entry name" value="PPAT_bact"/>
    <property type="match status" value="1"/>
</dbReference>
<dbReference type="InterPro" id="IPR004821">
    <property type="entry name" value="Cyt_trans-like"/>
</dbReference>
<dbReference type="InterPro" id="IPR001980">
    <property type="entry name" value="PPAT"/>
</dbReference>
<dbReference type="InterPro" id="IPR014729">
    <property type="entry name" value="Rossmann-like_a/b/a_fold"/>
</dbReference>
<dbReference type="NCBIfam" id="TIGR01510">
    <property type="entry name" value="coaD_prev_kdtB"/>
    <property type="match status" value="1"/>
</dbReference>
<dbReference type="NCBIfam" id="TIGR00125">
    <property type="entry name" value="cyt_tran_rel"/>
    <property type="match status" value="1"/>
</dbReference>
<dbReference type="PANTHER" id="PTHR21342">
    <property type="entry name" value="PHOSPHOPANTETHEINE ADENYLYLTRANSFERASE"/>
    <property type="match status" value="1"/>
</dbReference>
<dbReference type="PANTHER" id="PTHR21342:SF1">
    <property type="entry name" value="PHOSPHOPANTETHEINE ADENYLYLTRANSFERASE"/>
    <property type="match status" value="1"/>
</dbReference>
<dbReference type="Pfam" id="PF01467">
    <property type="entry name" value="CTP_transf_like"/>
    <property type="match status" value="1"/>
</dbReference>
<dbReference type="PRINTS" id="PR01020">
    <property type="entry name" value="LPSBIOSNTHSS"/>
</dbReference>
<dbReference type="SUPFAM" id="SSF52374">
    <property type="entry name" value="Nucleotidylyl transferase"/>
    <property type="match status" value="1"/>
</dbReference>
<sequence length="160" mass="18004">MGNIAVCPGSFDPVTLGHLDIIKRGAKIFDEVYVCVLNNSSKKPLFTVEERCELIRQATKDLPNIKVESFHGLLVDYAKQKEAKVILRGLRAVTDFEYEMQGTSMNKVLNDDIETFFMMTNNQYSFLSSSIVKEVAKYDGSVKGLVPKEVEEALIEKFKG</sequence>
<accession>A8FCW1</accession>
<reference key="1">
    <citation type="journal article" date="2007" name="PLoS ONE">
        <title>Paradoxical DNA repair and peroxide resistance gene conservation in Bacillus pumilus SAFR-032.</title>
        <authorList>
            <person name="Gioia J."/>
            <person name="Yerrapragada S."/>
            <person name="Qin X."/>
            <person name="Jiang H."/>
            <person name="Igboeli O.C."/>
            <person name="Muzny D."/>
            <person name="Dugan-Rocha S."/>
            <person name="Ding Y."/>
            <person name="Hawes A."/>
            <person name="Liu W."/>
            <person name="Perez L."/>
            <person name="Kovar C."/>
            <person name="Dinh H."/>
            <person name="Lee S."/>
            <person name="Nazareth L."/>
            <person name="Blyth P."/>
            <person name="Holder M."/>
            <person name="Buhay C."/>
            <person name="Tirumalai M.R."/>
            <person name="Liu Y."/>
            <person name="Dasgupta I."/>
            <person name="Bokhetache L."/>
            <person name="Fujita M."/>
            <person name="Karouia F."/>
            <person name="Eswara Moorthy P."/>
            <person name="Siefert J."/>
            <person name="Uzman A."/>
            <person name="Buzumbo P."/>
            <person name="Verma A."/>
            <person name="Zwiya H."/>
            <person name="McWilliams B.D."/>
            <person name="Olowu A."/>
            <person name="Clinkenbeard K.D."/>
            <person name="Newcombe D."/>
            <person name="Golebiewski L."/>
            <person name="Petrosino J.F."/>
            <person name="Nicholson W.L."/>
            <person name="Fox G.E."/>
            <person name="Venkateswaran K."/>
            <person name="Highlander S.K."/>
            <person name="Weinstock G.M."/>
        </authorList>
    </citation>
    <scope>NUCLEOTIDE SEQUENCE [LARGE SCALE GENOMIC DNA]</scope>
    <source>
        <strain>SAFR-032</strain>
    </source>
</reference>
<evidence type="ECO:0000255" key="1">
    <source>
        <dbReference type="HAMAP-Rule" id="MF_00151"/>
    </source>
</evidence>
<keyword id="KW-0067">ATP-binding</keyword>
<keyword id="KW-0173">Coenzyme A biosynthesis</keyword>
<keyword id="KW-0963">Cytoplasm</keyword>
<keyword id="KW-0460">Magnesium</keyword>
<keyword id="KW-0547">Nucleotide-binding</keyword>
<keyword id="KW-0548">Nucleotidyltransferase</keyword>
<keyword id="KW-0808">Transferase</keyword>
<gene>
    <name evidence="1" type="primary">coaD</name>
    <name type="ordered locus">BPUM_1395</name>
</gene>
<organism>
    <name type="scientific">Bacillus pumilus (strain SAFR-032)</name>
    <dbReference type="NCBI Taxonomy" id="315750"/>
    <lineage>
        <taxon>Bacteria</taxon>
        <taxon>Bacillati</taxon>
        <taxon>Bacillota</taxon>
        <taxon>Bacilli</taxon>
        <taxon>Bacillales</taxon>
        <taxon>Bacillaceae</taxon>
        <taxon>Bacillus</taxon>
    </lineage>
</organism>
<name>COAD_BACP2</name>
<comment type="function">
    <text evidence="1">Reversibly transfers an adenylyl group from ATP to 4'-phosphopantetheine, yielding dephospho-CoA (dPCoA) and pyrophosphate.</text>
</comment>
<comment type="catalytic activity">
    <reaction evidence="1">
        <text>(R)-4'-phosphopantetheine + ATP + H(+) = 3'-dephospho-CoA + diphosphate</text>
        <dbReference type="Rhea" id="RHEA:19801"/>
        <dbReference type="ChEBI" id="CHEBI:15378"/>
        <dbReference type="ChEBI" id="CHEBI:30616"/>
        <dbReference type="ChEBI" id="CHEBI:33019"/>
        <dbReference type="ChEBI" id="CHEBI:57328"/>
        <dbReference type="ChEBI" id="CHEBI:61723"/>
        <dbReference type="EC" id="2.7.7.3"/>
    </reaction>
</comment>
<comment type="cofactor">
    <cofactor evidence="1">
        <name>Mg(2+)</name>
        <dbReference type="ChEBI" id="CHEBI:18420"/>
    </cofactor>
</comment>
<comment type="pathway">
    <text evidence="1">Cofactor biosynthesis; coenzyme A biosynthesis; CoA from (R)-pantothenate: step 4/5.</text>
</comment>
<comment type="subunit">
    <text evidence="1">Homohexamer.</text>
</comment>
<comment type="subcellular location">
    <subcellularLocation>
        <location evidence="1">Cytoplasm</location>
    </subcellularLocation>
</comment>
<comment type="similarity">
    <text evidence="1">Belongs to the bacterial CoaD family.</text>
</comment>
<proteinExistence type="inferred from homology"/>
<feature type="chain" id="PRO_1000058158" description="Phosphopantetheine adenylyltransferase">
    <location>
        <begin position="1"/>
        <end position="160"/>
    </location>
</feature>
<feature type="binding site" evidence="1">
    <location>
        <begin position="10"/>
        <end position="11"/>
    </location>
    <ligand>
        <name>ATP</name>
        <dbReference type="ChEBI" id="CHEBI:30616"/>
    </ligand>
</feature>
<feature type="binding site" evidence="1">
    <location>
        <position position="10"/>
    </location>
    <ligand>
        <name>substrate</name>
    </ligand>
</feature>
<feature type="binding site" evidence="1">
    <location>
        <position position="18"/>
    </location>
    <ligand>
        <name>ATP</name>
        <dbReference type="ChEBI" id="CHEBI:30616"/>
    </ligand>
</feature>
<feature type="binding site" evidence="1">
    <location>
        <position position="42"/>
    </location>
    <ligand>
        <name>substrate</name>
    </ligand>
</feature>
<feature type="binding site" evidence="1">
    <location>
        <position position="74"/>
    </location>
    <ligand>
        <name>substrate</name>
    </ligand>
</feature>
<feature type="binding site" evidence="1">
    <location>
        <position position="88"/>
    </location>
    <ligand>
        <name>substrate</name>
    </ligand>
</feature>
<feature type="binding site" evidence="1">
    <location>
        <begin position="89"/>
        <end position="91"/>
    </location>
    <ligand>
        <name>ATP</name>
        <dbReference type="ChEBI" id="CHEBI:30616"/>
    </ligand>
</feature>
<feature type="binding site" evidence="1">
    <location>
        <position position="99"/>
    </location>
    <ligand>
        <name>ATP</name>
        <dbReference type="ChEBI" id="CHEBI:30616"/>
    </ligand>
</feature>
<feature type="binding site" evidence="1">
    <location>
        <begin position="124"/>
        <end position="130"/>
    </location>
    <ligand>
        <name>ATP</name>
        <dbReference type="ChEBI" id="CHEBI:30616"/>
    </ligand>
</feature>
<feature type="site" description="Transition state stabilizer" evidence="1">
    <location>
        <position position="18"/>
    </location>
</feature>